<accession>Q7H8E5</accession>
<name>PSBF_CONAR</name>
<dbReference type="EMBL" id="AY100888">
    <property type="protein sequence ID" value="AAM55673.1"/>
    <property type="molecule type" value="Genomic_DNA"/>
</dbReference>
<dbReference type="RefSeq" id="YP_010042694.1">
    <property type="nucleotide sequence ID" value="NC_054224.1"/>
</dbReference>
<dbReference type="SMR" id="Q7H8E5"/>
<dbReference type="GeneID" id="63649905"/>
<dbReference type="GO" id="GO:0009535">
    <property type="term" value="C:chloroplast thylakoid membrane"/>
    <property type="evidence" value="ECO:0007669"/>
    <property type="project" value="UniProtKB-SubCell"/>
</dbReference>
<dbReference type="GO" id="GO:0009539">
    <property type="term" value="C:photosystem II reaction center"/>
    <property type="evidence" value="ECO:0007669"/>
    <property type="project" value="InterPro"/>
</dbReference>
<dbReference type="GO" id="GO:0009055">
    <property type="term" value="F:electron transfer activity"/>
    <property type="evidence" value="ECO:0007669"/>
    <property type="project" value="UniProtKB-UniRule"/>
</dbReference>
<dbReference type="GO" id="GO:0020037">
    <property type="term" value="F:heme binding"/>
    <property type="evidence" value="ECO:0007669"/>
    <property type="project" value="InterPro"/>
</dbReference>
<dbReference type="GO" id="GO:0005506">
    <property type="term" value="F:iron ion binding"/>
    <property type="evidence" value="ECO:0007669"/>
    <property type="project" value="UniProtKB-UniRule"/>
</dbReference>
<dbReference type="GO" id="GO:0009767">
    <property type="term" value="P:photosynthetic electron transport chain"/>
    <property type="evidence" value="ECO:0007669"/>
    <property type="project" value="InterPro"/>
</dbReference>
<dbReference type="HAMAP" id="MF_00643">
    <property type="entry name" value="PSII_PsbF"/>
    <property type="match status" value="1"/>
</dbReference>
<dbReference type="InterPro" id="IPR006241">
    <property type="entry name" value="PSII_cyt_b559_bsu"/>
</dbReference>
<dbReference type="InterPro" id="IPR006216">
    <property type="entry name" value="PSII_cyt_b559_CS"/>
</dbReference>
<dbReference type="InterPro" id="IPR013081">
    <property type="entry name" value="PSII_cyt_b559_N"/>
</dbReference>
<dbReference type="NCBIfam" id="TIGR01333">
    <property type="entry name" value="cyt_b559_beta"/>
    <property type="match status" value="1"/>
</dbReference>
<dbReference type="Pfam" id="PF00283">
    <property type="entry name" value="Cytochrom_B559"/>
    <property type="match status" value="1"/>
</dbReference>
<dbReference type="PIRSF" id="PIRSF000037">
    <property type="entry name" value="PsbF"/>
    <property type="match status" value="1"/>
</dbReference>
<dbReference type="SUPFAM" id="SSF161045">
    <property type="entry name" value="Cytochrome b559 subunits"/>
    <property type="match status" value="1"/>
</dbReference>
<dbReference type="PROSITE" id="PS00537">
    <property type="entry name" value="CYTOCHROME_B559"/>
    <property type="match status" value="1"/>
</dbReference>
<keyword id="KW-0150">Chloroplast</keyword>
<keyword id="KW-0249">Electron transport</keyword>
<keyword id="KW-0349">Heme</keyword>
<keyword id="KW-0408">Iron</keyword>
<keyword id="KW-0472">Membrane</keyword>
<keyword id="KW-0479">Metal-binding</keyword>
<keyword id="KW-0602">Photosynthesis</keyword>
<keyword id="KW-0604">Photosystem II</keyword>
<keyword id="KW-0934">Plastid</keyword>
<keyword id="KW-0793">Thylakoid</keyword>
<keyword id="KW-0812">Transmembrane</keyword>
<keyword id="KW-1133">Transmembrane helix</keyword>
<keyword id="KW-0813">Transport</keyword>
<gene>
    <name evidence="1" type="primary">psbF</name>
</gene>
<feature type="chain" id="PRO_0000200377" description="Cytochrome b559 subunit beta">
    <location>
        <begin position="1"/>
        <end position="39"/>
    </location>
</feature>
<feature type="transmembrane region" description="Helical" evidence="1">
    <location>
        <begin position="14"/>
        <end position="30"/>
    </location>
</feature>
<feature type="binding site" description="axial binding residue" evidence="1">
    <location>
        <position position="18"/>
    </location>
    <ligand>
        <name>heme</name>
        <dbReference type="ChEBI" id="CHEBI:30413"/>
        <note>ligand shared with alpha subunit</note>
    </ligand>
    <ligandPart>
        <name>Fe</name>
        <dbReference type="ChEBI" id="CHEBI:18248"/>
    </ligandPart>
</feature>
<evidence type="ECO:0000255" key="1">
    <source>
        <dbReference type="HAMAP-Rule" id="MF_00643"/>
    </source>
</evidence>
<comment type="function">
    <text evidence="1">This b-type cytochrome is tightly associated with the reaction center of photosystem II (PSII). PSII is a light-driven water:plastoquinone oxidoreductase that uses light energy to abstract electrons from H(2)O, generating O(2) and a proton gradient subsequently used for ATP formation. It consists of a core antenna complex that captures photons, and an electron transfer chain that converts photonic excitation into a charge separation.</text>
</comment>
<comment type="cofactor">
    <cofactor evidence="1">
        <name>heme b</name>
        <dbReference type="ChEBI" id="CHEBI:60344"/>
    </cofactor>
    <text evidence="1">With its partner (PsbE) binds heme. PSII binds additional chlorophylls, carotenoids and specific lipids.</text>
</comment>
<comment type="subunit">
    <text evidence="1">Heterodimer of an alpha subunit and a beta subunit. PSII is composed of 1 copy each of membrane proteins PsbA, PsbB, PsbC, PsbD, PsbE, PsbF, PsbH, PsbI, PsbJ, PsbK, PsbL, PsbM, PsbT, PsbX, PsbY, PsbZ, Psb30/Ycf12, at least 3 peripheral proteins of the oxygen-evolving complex and a large number of cofactors. It forms dimeric complexes.</text>
</comment>
<comment type="subcellular location">
    <subcellularLocation>
        <location evidence="1">Plastid</location>
        <location evidence="1">Chloroplast thylakoid membrane</location>
        <topology evidence="1">Single-pass membrane protein</topology>
    </subcellularLocation>
</comment>
<comment type="similarity">
    <text evidence="1">Belongs to the PsbE/PsbF family.</text>
</comment>
<proteinExistence type="inferred from homology"/>
<geneLocation type="chloroplast"/>
<reference key="1">
    <citation type="journal article" date="2002" name="Am. J. Bot.">
        <title>Monophyly of the Convolvulaceae and circumscription of their major lineages based on DNA sequences of multiple chloroplast loci.</title>
        <authorList>
            <person name="Stefanovic S."/>
            <person name="Krueger L."/>
            <person name="Olmstead R.G."/>
        </authorList>
        <dbReference type="AGRICOLA" id="IND23320510"/>
    </citation>
    <scope>NUCLEOTIDE SEQUENCE [GENOMIC DNA]</scope>
</reference>
<sequence>MTIDRTYPIFTVRWLAVHGLAVPTVFFLGSISAMQFIQR</sequence>
<organism>
    <name type="scientific">Convolvulus arvensis</name>
    <name type="common">Field bindweed</name>
    <name type="synonym">Strophocaulos arvensis</name>
    <dbReference type="NCBI Taxonomy" id="4123"/>
    <lineage>
        <taxon>Eukaryota</taxon>
        <taxon>Viridiplantae</taxon>
        <taxon>Streptophyta</taxon>
        <taxon>Embryophyta</taxon>
        <taxon>Tracheophyta</taxon>
        <taxon>Spermatophyta</taxon>
        <taxon>Magnoliopsida</taxon>
        <taxon>eudicotyledons</taxon>
        <taxon>Gunneridae</taxon>
        <taxon>Pentapetalae</taxon>
        <taxon>asterids</taxon>
        <taxon>lamiids</taxon>
        <taxon>Solanales</taxon>
        <taxon>Convolvulaceae</taxon>
        <taxon>Convolvuleae</taxon>
        <taxon>Convolvulus</taxon>
    </lineage>
</organism>
<protein>
    <recommendedName>
        <fullName evidence="1">Cytochrome b559 subunit beta</fullName>
    </recommendedName>
    <alternativeName>
        <fullName evidence="1">PSII reaction center subunit VI</fullName>
    </alternativeName>
</protein>